<accession>Q88894</accession>
<sequence>MCAVTVVPDPTCCGTLSFKVPKDAKKGKHLGTFDIRQAIMDYGGLHSQEWCAKGIVNPTFTVRMHAPRNAFAGLSIACTFDDYKRIDLPALGNECPPSEMFELPTKVFMLKDADVHEWQFNYGELTGHGLCNWANVATQPTLYFFVASTNQVTMAADWQCIVTMHVDMGPVIDRFELNPTMTWPIQLGDTFAIDRYYEAKEIKLDGSTSMLSISYNFGGPVKHSKKHAISYSRAVMSRNLGWSGTISGSVKSVSSLFCTASFVIFPWECEAPPTLRQVLWGPHQIMHGDGQFEIAIKTRLHSAATTEEGFGRLGILPLSGPIAPDAHVGSYEFIVHINTWRPDSQVHPPMFSSSELYNWFTLTNLKPDANTGVVNFDIPGYIHDFASKDATVTLASNPLSWLVAATGWHYGEVDLCISWSRSKQAQAQEGSVSITTNYRDWGAYWQGQARIYDLRRTEAEIPIFLGSYAGATPSGALGKQNYVRISIVNAKDIVALRVCLRPKSIKFWGRSATLF</sequence>
<name>CAPSD_TRSV</name>
<keyword id="KW-0002">3D-structure</keyword>
<keyword id="KW-0167">Capsid protein</keyword>
<keyword id="KW-0903">Direct protein sequencing</keyword>
<keyword id="KW-0946">Virion</keyword>
<feature type="propeptide" id="PRO_0000037131">
    <location>
        <begin position="1"/>
        <end position="2"/>
    </location>
</feature>
<feature type="chain" id="PRO_0000037132" description="Capsid protein">
    <location>
        <begin position="3"/>
        <end position="515"/>
    </location>
</feature>
<feature type="strand" evidence="2">
    <location>
        <begin position="12"/>
        <end position="19"/>
    </location>
</feature>
<feature type="strand" evidence="2">
    <location>
        <begin position="29"/>
        <end position="34"/>
    </location>
</feature>
<feature type="helix" evidence="2">
    <location>
        <begin position="35"/>
        <end position="41"/>
    </location>
</feature>
<feature type="helix" evidence="2">
    <location>
        <begin position="44"/>
        <end position="53"/>
    </location>
</feature>
<feature type="strand" evidence="2">
    <location>
        <begin position="59"/>
        <end position="65"/>
    </location>
</feature>
<feature type="strand" evidence="2">
    <location>
        <begin position="75"/>
        <end position="83"/>
    </location>
</feature>
<feature type="helix" evidence="2">
    <location>
        <begin position="87"/>
        <end position="90"/>
    </location>
</feature>
<feature type="helix" evidence="2">
    <location>
        <begin position="96"/>
        <end position="99"/>
    </location>
</feature>
<feature type="strand" evidence="2">
    <location>
        <begin position="105"/>
        <end position="111"/>
    </location>
</feature>
<feature type="strand" evidence="2">
    <location>
        <begin position="117"/>
        <end position="121"/>
    </location>
</feature>
<feature type="turn" evidence="2">
    <location>
        <begin position="122"/>
        <end position="126"/>
    </location>
</feature>
<feature type="strand" evidence="2">
    <location>
        <begin position="130"/>
        <end position="133"/>
    </location>
</feature>
<feature type="strand" evidence="2">
    <location>
        <begin position="141"/>
        <end position="146"/>
    </location>
</feature>
<feature type="strand" evidence="2">
    <location>
        <begin position="159"/>
        <end position="165"/>
    </location>
</feature>
<feature type="strand" evidence="2">
    <location>
        <begin position="180"/>
        <end position="184"/>
    </location>
</feature>
<feature type="strand" evidence="2">
    <location>
        <begin position="191"/>
        <end position="202"/>
    </location>
</feature>
<feature type="strand" evidence="2">
    <location>
        <begin position="210"/>
        <end position="212"/>
    </location>
</feature>
<feature type="strand" evidence="2">
    <location>
        <begin position="227"/>
        <end position="230"/>
    </location>
</feature>
<feature type="helix" evidence="2">
    <location>
        <begin position="231"/>
        <end position="236"/>
    </location>
</feature>
<feature type="strand" evidence="2">
    <location>
        <begin position="239"/>
        <end position="242"/>
    </location>
</feature>
<feature type="strand" evidence="2">
    <location>
        <begin position="244"/>
        <end position="252"/>
    </location>
</feature>
<feature type="strand" evidence="2">
    <location>
        <begin position="259"/>
        <end position="267"/>
    </location>
</feature>
<feature type="helix" evidence="2">
    <location>
        <begin position="275"/>
        <end position="280"/>
    </location>
</feature>
<feature type="strand" evidence="2">
    <location>
        <begin position="284"/>
        <end position="286"/>
    </location>
</feature>
<feature type="strand" evidence="2">
    <location>
        <begin position="288"/>
        <end position="295"/>
    </location>
</feature>
<feature type="strand" evidence="2">
    <location>
        <begin position="303"/>
        <end position="306"/>
    </location>
</feature>
<feature type="strand" evidence="2">
    <location>
        <begin position="308"/>
        <end position="310"/>
    </location>
</feature>
<feature type="strand" evidence="2">
    <location>
        <begin position="312"/>
        <end position="322"/>
    </location>
</feature>
<feature type="strand" evidence="2">
    <location>
        <begin position="331"/>
        <end position="342"/>
    </location>
</feature>
<feature type="strand" evidence="2">
    <location>
        <begin position="349"/>
        <end position="351"/>
    </location>
</feature>
<feature type="strand" evidence="2">
    <location>
        <begin position="357"/>
        <end position="364"/>
    </location>
</feature>
<feature type="turn" evidence="2">
    <location>
        <begin position="369"/>
        <end position="371"/>
    </location>
</feature>
<feature type="strand" evidence="2">
    <location>
        <begin position="388"/>
        <end position="394"/>
    </location>
</feature>
<feature type="helix" evidence="2">
    <location>
        <begin position="398"/>
        <end position="404"/>
    </location>
</feature>
<feature type="strand" evidence="2">
    <location>
        <begin position="406"/>
        <end position="418"/>
    </location>
</feature>
<feature type="turn" evidence="2">
    <location>
        <begin position="425"/>
        <end position="427"/>
    </location>
</feature>
<feature type="strand" evidence="2">
    <location>
        <begin position="432"/>
        <end position="436"/>
    </location>
</feature>
<feature type="strand" evidence="2">
    <location>
        <begin position="447"/>
        <end position="452"/>
    </location>
</feature>
<feature type="strand" evidence="2">
    <location>
        <begin position="455"/>
        <end position="460"/>
    </location>
</feature>
<feature type="strand" evidence="2">
    <location>
        <begin position="472"/>
        <end position="474"/>
    </location>
</feature>
<feature type="strand" evidence="2">
    <location>
        <begin position="480"/>
        <end position="484"/>
    </location>
</feature>
<feature type="turn" evidence="2">
    <location>
        <begin position="489"/>
        <end position="491"/>
    </location>
</feature>
<feature type="strand" evidence="2">
    <location>
        <begin position="494"/>
        <end position="510"/>
    </location>
</feature>
<feature type="strand" evidence="2">
    <location>
        <begin position="512"/>
        <end position="515"/>
    </location>
</feature>
<comment type="subunit">
    <text>The virus coat is formed of 60 copies of the coat protein.</text>
</comment>
<comment type="subcellular location">
    <subcellularLocation>
        <location evidence="1">Virion</location>
    </subcellularLocation>
</comment>
<comment type="online information" name="Virus Particle ExploreR db">
    <link uri="https://viperdb.org/Info_Page.php?VDB=1a6c"/>
    <text>Icosahedral capsid structure</text>
</comment>
<dbReference type="EMBL" id="L09205">
    <property type="protein sequence ID" value="AAA74963.1"/>
    <property type="molecule type" value="Genomic_RNA"/>
</dbReference>
<dbReference type="PDB" id="1A6C">
    <property type="method" value="X-ray"/>
    <property type="resolution" value="3.50 A"/>
    <property type="chains" value="A=3-515"/>
</dbReference>
<dbReference type="PDBsum" id="1A6C"/>
<dbReference type="SMR" id="Q88894"/>
<dbReference type="EvolutionaryTrace" id="Q88894"/>
<dbReference type="GO" id="GO:0019028">
    <property type="term" value="C:viral capsid"/>
    <property type="evidence" value="ECO:0007669"/>
    <property type="project" value="UniProtKB-KW"/>
</dbReference>
<dbReference type="GO" id="GO:0005198">
    <property type="term" value="F:structural molecule activity"/>
    <property type="evidence" value="ECO:0007669"/>
    <property type="project" value="InterPro"/>
</dbReference>
<dbReference type="Gene3D" id="2.60.120.20">
    <property type="match status" value="2"/>
</dbReference>
<dbReference type="InterPro" id="IPR005054">
    <property type="entry name" value="Nepo_coat"/>
</dbReference>
<dbReference type="InterPro" id="IPR005305">
    <property type="entry name" value="Nepo_coat_C"/>
</dbReference>
<dbReference type="InterPro" id="IPR005306">
    <property type="entry name" value="Nepo_coat_N"/>
</dbReference>
<dbReference type="InterPro" id="IPR029053">
    <property type="entry name" value="Viral_coat"/>
</dbReference>
<dbReference type="Pfam" id="PF03391">
    <property type="entry name" value="Nepo_coat"/>
    <property type="match status" value="1"/>
</dbReference>
<dbReference type="Pfam" id="PF03688">
    <property type="entry name" value="Nepo_coat_C"/>
    <property type="match status" value="1"/>
</dbReference>
<dbReference type="Pfam" id="PF03689">
    <property type="entry name" value="Nepo_coat_N"/>
    <property type="match status" value="1"/>
</dbReference>
<dbReference type="SUPFAM" id="SSF88633">
    <property type="entry name" value="Positive stranded ssRNA viruses"/>
    <property type="match status" value="3"/>
</dbReference>
<proteinExistence type="evidence at protein level"/>
<reference key="1">
    <citation type="journal article" date="1993" name="Virus Res.">
        <title>Nucleotide sequence and in vitro expression of the capsid protein gene of tobacco ringspot virus.</title>
        <authorList>
            <person name="Buckley B."/>
            <person name="Silva S."/>
            <person name="Singh S."/>
        </authorList>
    </citation>
    <scope>NUCLEOTIDE SEQUENCE [GENOMIC RNA]</scope>
    <scope>PARTIAL PROTEIN SEQUENCE</scope>
</reference>
<reference key="2">
    <citation type="journal article" date="1995" name="Virus Res.">
        <authorList>
            <person name="Buckley B."/>
            <person name="Silva S."/>
            <person name="Singh S."/>
        </authorList>
    </citation>
    <scope>ERRATUM OF PUBMED:8109164</scope>
</reference>
<reference key="3">
    <citation type="journal article" date="1998" name="Structure">
        <title>The structure of tobacco ringspot virus: a link in the evolution of icosahedral capsids in the picornavirus superfamily.</title>
        <authorList>
            <person name="Chandrasekar V."/>
            <person name="Johnson J.E."/>
        </authorList>
    </citation>
    <scope>X-RAY CRYSTALLOGRAPHY (3.5 ANGSTROMS)</scope>
</reference>
<evidence type="ECO:0000305" key="1"/>
<evidence type="ECO:0007829" key="2">
    <source>
        <dbReference type="PDB" id="1A6C"/>
    </source>
</evidence>
<organism>
    <name type="scientific">Tobacco ringspot virus</name>
    <name type="common">TobRV</name>
    <name type="synonym">TRSV</name>
    <dbReference type="NCBI Taxonomy" id="12282"/>
    <lineage>
        <taxon>Viruses</taxon>
        <taxon>Riboviria</taxon>
        <taxon>Orthornavirae</taxon>
        <taxon>Pisuviricota</taxon>
        <taxon>Pisoniviricetes</taxon>
        <taxon>Picornavirales</taxon>
        <taxon>Secoviridae</taxon>
        <taxon>Comovirinae</taxon>
        <taxon>Nepovirus</taxon>
        <taxon>Nepovirus nicotianae</taxon>
    </lineage>
</organism>
<protein>
    <recommendedName>
        <fullName>Capsid protein</fullName>
    </recommendedName>
    <alternativeName>
        <fullName>Coat protein</fullName>
    </alternativeName>
</protein>
<organismHost>
    <name type="scientific">Anemonastrum</name>
    <dbReference type="NCBI Taxonomy" id="22868"/>
</organismHost>
<organismHost>
    <name type="scientific">Bacopa</name>
    <dbReference type="NCBI Taxonomy" id="90645"/>
</organismHost>
<organismHost>
    <name type="scientific">Capsicum annuum</name>
    <name type="common">Capsicum pepper</name>
    <dbReference type="NCBI Taxonomy" id="4072"/>
</organismHost>
<organismHost>
    <name type="scientific">Carica papaya</name>
    <name type="common">Papaya</name>
    <dbReference type="NCBI Taxonomy" id="3649"/>
</organismHost>
<organismHost>
    <name type="scientific">Citrullus lanatus</name>
    <name type="common">Watermelon</name>
    <name type="synonym">Citrullus vulgaris</name>
    <dbReference type="NCBI Taxonomy" id="3654"/>
</organismHost>
<organismHost>
    <name type="scientific">Cornus</name>
    <dbReference type="NCBI Taxonomy" id="4281"/>
</organismHost>
<organismHost>
    <name type="scientific">Cucumis melo</name>
    <name type="common">Muskmelon</name>
    <dbReference type="NCBI Taxonomy" id="3656"/>
</organismHost>
<organismHost>
    <name type="scientific">Cucumis sativus</name>
    <name type="common">Cucumber</name>
    <dbReference type="NCBI Taxonomy" id="3659"/>
</organismHost>
<organismHost>
    <name type="scientific">Daphne</name>
    <dbReference type="NCBI Taxonomy" id="66679"/>
</organismHost>
<organismHost>
    <name type="scientific">Fraxinus</name>
    <name type="common">ash trees</name>
    <dbReference type="NCBI Taxonomy" id="38871"/>
</organismHost>
<organismHost>
    <name type="scientific">Gladiolus</name>
    <dbReference type="NCBI Taxonomy" id="49747"/>
</organismHost>
<organismHost>
    <name type="scientific">Glycine max</name>
    <name type="common">Soybean</name>
    <name type="synonym">Glycine hispida</name>
    <dbReference type="NCBI Taxonomy" id="3847"/>
</organismHost>
<organismHost>
    <name type="scientific">Hemerocallis</name>
    <dbReference type="NCBI Taxonomy" id="16107"/>
</organismHost>
<organismHost>
    <name type="scientific">Hydrangea</name>
    <dbReference type="NCBI Taxonomy" id="23109"/>
</organismHost>
<organismHost>
    <name type="scientific">Impatiens walleriana</name>
    <dbReference type="NCBI Taxonomy" id="127142"/>
</organismHost>
<organismHost>
    <name type="scientific">Iris</name>
    <dbReference type="NCBI Taxonomy" id="26378"/>
</organismHost>
<organismHost>
    <name type="scientific">Lobelia</name>
    <dbReference type="NCBI Taxonomy" id="4382"/>
</organismHost>
<organismHost>
    <name type="scientific">Lupinus</name>
    <dbReference type="NCBI Taxonomy" id="3869"/>
</organismHost>
<organismHost>
    <name type="scientific">Malus domestica</name>
    <name type="common">Apple</name>
    <name type="synonym">Pyrus malus</name>
    <dbReference type="NCBI Taxonomy" id="3750"/>
</organismHost>
<organismHost>
    <name type="scientific">Malus pumila</name>
    <name type="common">Paradise apple</name>
    <dbReference type="NCBI Taxonomy" id="283210"/>
</organismHost>
<organismHost>
    <name type="scientific">Mentha</name>
    <dbReference type="NCBI Taxonomy" id="21819"/>
</organismHost>
<organismHost>
    <name type="scientific">Narcissus pseudonarcissus</name>
    <name type="common">Daffodil</name>
    <dbReference type="NCBI Taxonomy" id="39639"/>
</organismHost>
<organismHost>
    <name type="scientific">Nicotiana tabacum</name>
    <name type="common">Common tobacco</name>
    <dbReference type="NCBI Taxonomy" id="4097"/>
</organismHost>
<organismHost>
    <name type="scientific">Pelargonium</name>
    <dbReference type="NCBI Taxonomy" id="4030"/>
</organismHost>
<organismHost>
    <name type="scientific">Petunia</name>
    <dbReference type="NCBI Taxonomy" id="4101"/>
</organismHost>
<organismHost>
    <name type="scientific">Phaseolus vulgaris</name>
    <name type="common">Kidney bean</name>
    <name type="synonym">French bean</name>
    <dbReference type="NCBI Taxonomy" id="3885"/>
</organismHost>
<organismHost>
    <name type="scientific">Phlox subulata</name>
    <dbReference type="NCBI Taxonomy" id="103544"/>
</organismHost>
<organismHost>
    <name type="scientific">Portulaca</name>
    <dbReference type="NCBI Taxonomy" id="3582"/>
</organismHost>
<organismHost>
    <name type="scientific">Prunus avium</name>
    <name type="common">Cherry</name>
    <name type="synonym">Cerasus avium</name>
    <dbReference type="NCBI Taxonomy" id="42229"/>
</organismHost>
<organismHost>
    <name type="scientific">Prunus incisa</name>
    <dbReference type="NCBI Taxonomy" id="137206"/>
</organismHost>
<organismHost>
    <name type="scientific">Prunus persica</name>
    <name type="common">Peach</name>
    <name type="synonym">Amygdalus persica</name>
    <dbReference type="NCBI Taxonomy" id="3760"/>
</organismHost>
<organismHost>
    <name type="scientific">Prunus serrula</name>
    <dbReference type="NCBI Taxonomy" id="1358727"/>
</organismHost>
<organismHost>
    <name type="scientific">Prunus serrulata</name>
    <dbReference type="NCBI Taxonomy" id="97321"/>
</organismHost>
<organismHost>
    <name type="scientific">Pueraria montana</name>
    <dbReference type="NCBI Taxonomy" id="132459"/>
</organismHost>
<organismHost>
    <name type="scientific">Rubus</name>
    <name type="common">bramble</name>
    <dbReference type="NCBI Taxonomy" id="23216"/>
</organismHost>
<organismHost>
    <name type="scientific">Rubus fruticosus</name>
    <dbReference type="NCBI Taxonomy" id="211815"/>
</organismHost>
<organismHost>
    <name type="scientific">Solanum lycopersicum</name>
    <name type="common">Tomato</name>
    <name type="synonym">Lycopersicon esculentum</name>
    <dbReference type="NCBI Taxonomy" id="4081"/>
</organismHost>
<organismHost>
    <name type="scientific">Solanum melongena</name>
    <name type="common">eggplant</name>
    <dbReference type="NCBI Taxonomy" id="4111"/>
</organismHost>
<organismHost>
    <name type="scientific">Vaccinium corymbosum</name>
    <name type="common">Highbush blueberry</name>
    <dbReference type="NCBI Taxonomy" id="69266"/>
</organismHost>
<organismHost>
    <name type="scientific">Vigna unguiculata</name>
    <name type="common">Cowpea</name>
    <dbReference type="NCBI Taxonomy" id="3917"/>
</organismHost>
<organismHost>
    <name type="scientific">Vitis vinifera</name>
    <name type="common">Grape</name>
    <dbReference type="NCBI Taxonomy" id="29760"/>
</organismHost>